<comment type="function">
    <text evidence="4">Secreted effector that suppresses host plant glucan elicitor-mediated defense responses (PubMed:18624645). Targets host endoglucanases and inhibits the endoglucanase-mediated release of elicitor-active glucan oligosaccharides from P.infestans cell walls (PubMed:18624645).</text>
</comment>
<comment type="subunit">
    <text evidence="4">Forms an apoplastic complex with host endoglucanases in tomato leaves during P.infestans infection.</text>
</comment>
<comment type="subcellular location">
    <subcellularLocation>
        <location evidence="4">Secreted</location>
    </subcellularLocation>
</comment>
<comment type="induction">
    <text evidence="4">Expressed during infection and the expression levels increase with disease progression.</text>
</comment>
<comment type="similarity">
    <text evidence="6">Belongs to the peptidase S1 family.</text>
</comment>
<comment type="caution">
    <text evidence="7">None of the predicted glucanase inhibitor proteins (GIPS) has an intact catalytic triad, therefore, GIPs are proteolytically inactive.</text>
</comment>
<accession>B1AC90</accession>
<protein>
    <recommendedName>
        <fullName evidence="5">Glucanase inhibitor protein 1</fullName>
    </recommendedName>
</protein>
<dbReference type="EMBL" id="EU443395">
    <property type="protein sequence ID" value="ACA23213.1"/>
    <property type="molecule type" value="Genomic_DNA"/>
</dbReference>
<dbReference type="SMR" id="B1AC90"/>
<dbReference type="GlyCosmos" id="B1AC90">
    <property type="glycosylation" value="5 sites, No reported glycans"/>
</dbReference>
<dbReference type="VEuPathDB" id="FungiDB:PITG_13638"/>
<dbReference type="OMA" id="ATISIPH"/>
<dbReference type="GO" id="GO:0005576">
    <property type="term" value="C:extracellular region"/>
    <property type="evidence" value="ECO:0007669"/>
    <property type="project" value="UniProtKB-SubCell"/>
</dbReference>
<dbReference type="GO" id="GO:0004252">
    <property type="term" value="F:serine-type endopeptidase activity"/>
    <property type="evidence" value="ECO:0007669"/>
    <property type="project" value="InterPro"/>
</dbReference>
<dbReference type="GO" id="GO:0006508">
    <property type="term" value="P:proteolysis"/>
    <property type="evidence" value="ECO:0007669"/>
    <property type="project" value="InterPro"/>
</dbReference>
<dbReference type="CDD" id="cd00190">
    <property type="entry name" value="Tryp_SPc"/>
    <property type="match status" value="1"/>
</dbReference>
<dbReference type="FunFam" id="2.40.10.10:FF:000156">
    <property type="entry name" value="MIP06385p"/>
    <property type="match status" value="1"/>
</dbReference>
<dbReference type="Gene3D" id="2.40.10.10">
    <property type="entry name" value="Trypsin-like serine proteases"/>
    <property type="match status" value="1"/>
</dbReference>
<dbReference type="InterPro" id="IPR050430">
    <property type="entry name" value="Peptidase_S1"/>
</dbReference>
<dbReference type="InterPro" id="IPR009003">
    <property type="entry name" value="Peptidase_S1_PA"/>
</dbReference>
<dbReference type="InterPro" id="IPR043504">
    <property type="entry name" value="Peptidase_S1_PA_chymotrypsin"/>
</dbReference>
<dbReference type="InterPro" id="IPR001314">
    <property type="entry name" value="Peptidase_S1A"/>
</dbReference>
<dbReference type="InterPro" id="IPR001254">
    <property type="entry name" value="Trypsin_dom"/>
</dbReference>
<dbReference type="PANTHER" id="PTHR24276:SF98">
    <property type="entry name" value="FI18310P1-RELATED"/>
    <property type="match status" value="1"/>
</dbReference>
<dbReference type="PANTHER" id="PTHR24276">
    <property type="entry name" value="POLYSERASE-RELATED"/>
    <property type="match status" value="1"/>
</dbReference>
<dbReference type="Pfam" id="PF00089">
    <property type="entry name" value="Trypsin"/>
    <property type="match status" value="1"/>
</dbReference>
<dbReference type="PRINTS" id="PR00722">
    <property type="entry name" value="CHYMOTRYPSIN"/>
</dbReference>
<dbReference type="SMART" id="SM00020">
    <property type="entry name" value="Tryp_SPc"/>
    <property type="match status" value="1"/>
</dbReference>
<dbReference type="SUPFAM" id="SSF50494">
    <property type="entry name" value="Trypsin-like serine proteases"/>
    <property type="match status" value="1"/>
</dbReference>
<dbReference type="PROSITE" id="PS50240">
    <property type="entry name" value="TRYPSIN_DOM"/>
    <property type="match status" value="1"/>
</dbReference>
<keyword id="KW-1015">Disulfide bond</keyword>
<keyword id="KW-0325">Glycoprotein</keyword>
<keyword id="KW-0964">Secreted</keyword>
<keyword id="KW-0732">Signal</keyword>
<keyword id="KW-0843">Virulence</keyword>
<proteinExistence type="evidence at protein level"/>
<evidence type="ECO:0000255" key="1"/>
<evidence type="ECO:0000255" key="2">
    <source>
        <dbReference type="PROSITE-ProRule" id="PRU00274"/>
    </source>
</evidence>
<evidence type="ECO:0000255" key="3">
    <source>
        <dbReference type="PROSITE-ProRule" id="PRU00498"/>
    </source>
</evidence>
<evidence type="ECO:0000269" key="4">
    <source>
    </source>
</evidence>
<evidence type="ECO:0000303" key="5">
    <source>
    </source>
</evidence>
<evidence type="ECO:0000305" key="6"/>
<evidence type="ECO:0000305" key="7">
    <source>
    </source>
</evidence>
<feature type="signal peptide" evidence="1">
    <location>
        <begin position="1"/>
        <end position="19"/>
    </location>
</feature>
<feature type="chain" id="PRO_5002761247" description="Glucanase inhibitor protein 1" evidence="1">
    <location>
        <begin position="20"/>
        <end position="258"/>
    </location>
</feature>
<feature type="domain" description="Peptidase S1" evidence="2">
    <location>
        <begin position="27"/>
        <end position="254"/>
    </location>
</feature>
<feature type="glycosylation site" description="N-linked (GlcNAc...) asparagine" evidence="3">
    <location>
        <position position="87"/>
    </location>
</feature>
<feature type="glycosylation site" description="N-linked (GlcNAc...) asparagine" evidence="3">
    <location>
        <position position="102"/>
    </location>
</feature>
<feature type="glycosylation site" description="N-linked (GlcNAc...) asparagine" evidence="3">
    <location>
        <position position="107"/>
    </location>
</feature>
<feature type="glycosylation site" description="N-linked (GlcNAc...) asparagine" evidence="3">
    <location>
        <position position="157"/>
    </location>
</feature>
<feature type="glycosylation site" description="N-linked (GlcNAc...) asparagine" evidence="3">
    <location>
        <position position="185"/>
    </location>
</feature>
<feature type="disulfide bond" evidence="2">
    <location>
        <begin position="54"/>
        <end position="70"/>
    </location>
</feature>
<feature type="disulfide bond" evidence="2">
    <location>
        <begin position="177"/>
        <end position="189"/>
    </location>
</feature>
<feature type="disulfide bond" evidence="2">
    <location>
        <begin position="199"/>
        <end position="230"/>
    </location>
</feature>
<gene>
    <name evidence="5" type="primary">GIP1</name>
</gene>
<reference key="1">
    <citation type="journal article" date="2008" name="Mol. Plant Microbe Interact.">
        <title>Structure of the glucanase inhibitor protein (GIP) family from phytophthora species suggests coevolution with plant endo-beta-1,3-glucanases.</title>
        <authorList>
            <person name="Damasceno C.M."/>
            <person name="Bishop J.G."/>
            <person name="Ripoll D.R."/>
            <person name="Win J."/>
            <person name="Kamoun S."/>
            <person name="Rose J.K."/>
        </authorList>
    </citation>
    <scope>NUCLEOTIDE SEQUENCE [GENOMIC DNA]</scope>
    <scope>FUNCTION</scope>
    <scope>SUBCELLULAR LOCATION</scope>
    <scope>INDUCTION</scope>
    <scope>INTERACTION WITH HOST ENDOGLUCANASES</scope>
    <source>
        <strain>US970001</strain>
    </source>
</reference>
<sequence length="258" mass="26717">MRVVPTLAAASLALGAVAGEHVERQLILGGGEVPIGTKTYATGIRSTADGNAFCAGALVSPTHVLTTAACTGFEPPKFVAVGTHYINGTKDGEQIKVVSAQNHTLNNASSASYDFALLTLEKPSKFSPIKLPNPDDSDIVAGMWTKVMGWGDTSYPNGTRSNELQSVGVEVWNNEDCARLFVVDNSSVCAGGAPGRDACVGDTGASLVKEKGQGDADDILIGLSSWGSGCGDPGIPSVYSRVSTAIEWITSVTKVQQV</sequence>
<name>GIP1_PHYIN</name>
<organism>
    <name type="scientific">Phytophthora infestans</name>
    <name type="common">Potato late blight agent</name>
    <name type="synonym">Botrytis infestans</name>
    <dbReference type="NCBI Taxonomy" id="4787"/>
    <lineage>
        <taxon>Eukaryota</taxon>
        <taxon>Sar</taxon>
        <taxon>Stramenopiles</taxon>
        <taxon>Oomycota</taxon>
        <taxon>Peronosporales</taxon>
        <taxon>Peronosporaceae</taxon>
        <taxon>Phytophthora</taxon>
    </lineage>
</organism>